<evidence type="ECO:0000255" key="1">
    <source>
        <dbReference type="HAMAP-Rule" id="MF_00393"/>
    </source>
</evidence>
<proteinExistence type="inferred from homology"/>
<name>PLSB_SALPC</name>
<dbReference type="EC" id="2.3.1.15" evidence="1"/>
<dbReference type="EMBL" id="CP000857">
    <property type="protein sequence ID" value="ACN48359.1"/>
    <property type="molecule type" value="Genomic_DNA"/>
</dbReference>
<dbReference type="RefSeq" id="WP_000017360.1">
    <property type="nucleotide sequence ID" value="NC_012125.1"/>
</dbReference>
<dbReference type="SMR" id="C0Q4E0"/>
<dbReference type="KEGG" id="sei:SPC_4296"/>
<dbReference type="HOGENOM" id="CLU_015407_0_0_6"/>
<dbReference type="UniPathway" id="UPA00557">
    <property type="reaction ID" value="UER00612"/>
</dbReference>
<dbReference type="Proteomes" id="UP000001599">
    <property type="component" value="Chromosome"/>
</dbReference>
<dbReference type="GO" id="GO:0005886">
    <property type="term" value="C:plasma membrane"/>
    <property type="evidence" value="ECO:0007669"/>
    <property type="project" value="UniProtKB-SubCell"/>
</dbReference>
<dbReference type="GO" id="GO:0004366">
    <property type="term" value="F:glycerol-3-phosphate O-acyltransferase activity"/>
    <property type="evidence" value="ECO:0007669"/>
    <property type="project" value="UniProtKB-UniRule"/>
</dbReference>
<dbReference type="GO" id="GO:0016024">
    <property type="term" value="P:CDP-diacylglycerol biosynthetic process"/>
    <property type="evidence" value="ECO:0007669"/>
    <property type="project" value="UniProtKB-UniRule"/>
</dbReference>
<dbReference type="GO" id="GO:0006631">
    <property type="term" value="P:fatty acid metabolic process"/>
    <property type="evidence" value="ECO:0007669"/>
    <property type="project" value="TreeGrafter"/>
</dbReference>
<dbReference type="CDD" id="cd07993">
    <property type="entry name" value="LPLAT_DHAPAT-like"/>
    <property type="match status" value="1"/>
</dbReference>
<dbReference type="HAMAP" id="MF_00393">
    <property type="entry name" value="Glyc3P_acyltrans"/>
    <property type="match status" value="1"/>
</dbReference>
<dbReference type="InterPro" id="IPR022284">
    <property type="entry name" value="GPAT/DHAPAT"/>
</dbReference>
<dbReference type="InterPro" id="IPR045520">
    <property type="entry name" value="GPAT/DHAPAT_C"/>
</dbReference>
<dbReference type="InterPro" id="IPR041728">
    <property type="entry name" value="GPAT/DHAPAT_LPLAT"/>
</dbReference>
<dbReference type="InterPro" id="IPR028354">
    <property type="entry name" value="GPAT_PlsB"/>
</dbReference>
<dbReference type="InterPro" id="IPR002123">
    <property type="entry name" value="Plipid/glycerol_acylTrfase"/>
</dbReference>
<dbReference type="NCBIfam" id="TIGR03703">
    <property type="entry name" value="plsB"/>
    <property type="match status" value="1"/>
</dbReference>
<dbReference type="NCBIfam" id="NF003441">
    <property type="entry name" value="PRK04974.1"/>
    <property type="match status" value="1"/>
</dbReference>
<dbReference type="PANTHER" id="PTHR12563:SF17">
    <property type="entry name" value="DIHYDROXYACETONE PHOSPHATE ACYLTRANSFERASE"/>
    <property type="match status" value="1"/>
</dbReference>
<dbReference type="PANTHER" id="PTHR12563">
    <property type="entry name" value="GLYCEROL-3-PHOSPHATE ACYLTRANSFERASE"/>
    <property type="match status" value="1"/>
</dbReference>
<dbReference type="Pfam" id="PF01553">
    <property type="entry name" value="Acyltransferase"/>
    <property type="match status" value="1"/>
</dbReference>
<dbReference type="Pfam" id="PF19277">
    <property type="entry name" value="GPAT_C"/>
    <property type="match status" value="1"/>
</dbReference>
<dbReference type="PIRSF" id="PIRSF500064">
    <property type="entry name" value="GPAT"/>
    <property type="match status" value="1"/>
</dbReference>
<dbReference type="PIRSF" id="PIRSF000437">
    <property type="entry name" value="GPAT_DHAPAT"/>
    <property type="match status" value="1"/>
</dbReference>
<dbReference type="SMART" id="SM00563">
    <property type="entry name" value="PlsC"/>
    <property type="match status" value="1"/>
</dbReference>
<dbReference type="SUPFAM" id="SSF69593">
    <property type="entry name" value="Glycerol-3-phosphate (1)-acyltransferase"/>
    <property type="match status" value="1"/>
</dbReference>
<protein>
    <recommendedName>
        <fullName evidence="1">Glycerol-3-phosphate acyltransferase</fullName>
        <shortName evidence="1">GPAT</shortName>
        <ecNumber evidence="1">2.3.1.15</ecNumber>
    </recommendedName>
</protein>
<keyword id="KW-0012">Acyltransferase</keyword>
<keyword id="KW-0997">Cell inner membrane</keyword>
<keyword id="KW-1003">Cell membrane</keyword>
<keyword id="KW-0444">Lipid biosynthesis</keyword>
<keyword id="KW-0443">Lipid metabolism</keyword>
<keyword id="KW-0472">Membrane</keyword>
<keyword id="KW-0594">Phospholipid biosynthesis</keyword>
<keyword id="KW-1208">Phospholipid metabolism</keyword>
<keyword id="KW-0808">Transferase</keyword>
<reference key="1">
    <citation type="journal article" date="2009" name="PLoS ONE">
        <title>Salmonella paratyphi C: genetic divergence from Salmonella choleraesuis and pathogenic convergence with Salmonella typhi.</title>
        <authorList>
            <person name="Liu W.-Q."/>
            <person name="Feng Y."/>
            <person name="Wang Y."/>
            <person name="Zou Q.-H."/>
            <person name="Chen F."/>
            <person name="Guo J.-T."/>
            <person name="Peng Y.-H."/>
            <person name="Jin Y."/>
            <person name="Li Y.-G."/>
            <person name="Hu S.-N."/>
            <person name="Johnston R.N."/>
            <person name="Liu G.-R."/>
            <person name="Liu S.-L."/>
        </authorList>
    </citation>
    <scope>NUCLEOTIDE SEQUENCE [LARGE SCALE GENOMIC DNA]</scope>
    <source>
        <strain>RKS4594</strain>
    </source>
</reference>
<accession>C0Q4E0</accession>
<feature type="chain" id="PRO_1000192408" description="Glycerol-3-phosphate acyltransferase">
    <location>
        <begin position="1"/>
        <end position="806"/>
    </location>
</feature>
<feature type="short sequence motif" description="HXXXXD motif">
    <location>
        <begin position="305"/>
        <end position="310"/>
    </location>
</feature>
<sequence length="806" mass="91227">MSGWPRIYYKLLNLPLSILVKSKSIPAEPAQELGLDTSRPIMYVLPYNSKADLLTLRAQCLAHDLPDPLEPLEIDGALLPRYVFIHGGPRVFTYYTPKEESVKLFHDYLDLHRSNPALDVQMVPVSVMFGRAPGREKGEDNPPLRMLNGVQKFFAISWLGRDSFVRFSPSVSLRRMADEHGTDKIIAQKLARVARMHFARQRLAAVGPRLPARQDLFNKLLASKAIARAVEDEARSKKISHEKAQQNAIALMEEIAANFSYEMIRLTDRILGFTWNRLYQGINVHNAERVRQLAHDGHEIVYVPCHRSHMDYLLLSYVLYHQGLVPPHIAAGINLNFWPAGPIFRRLGAFFIRRTFKGNKLYSTVFREYLGELFSRGYSVEYFVEGGRSRTGRLLDPKTGTLSMTIQAMLRGGTRPITLVPIYIGYEHVMEVGTYAKELRGATKEKESLPQMLKGLSKLRNLGQGYVNFGEPMPLMTYLNQHVPEWRESIDPIEAIRPAWLTPTVNSIAADLMVRINNAGAANAMNLCCTALLASRQRSLTREQLTEQLDCYLDLMRNVPYSTDSTVPAASAGELIAHALQMNKFEVEKDTIGDIIILPREQAVLMTYYRNNIAHMLIMPSLMAAIITQHRRISRDALQQHVEALYPMLKAELFLRWEREELASVIDALASEMQRQGLITLQDDELHINPTHSRTLQLLAAGARETLQRYAITFWLLSANPSINRSTLEKESRTVAQRLSVLHGINAPEFFDKAVFSSLVLTLRDEGYISDTGDAEPAETMKIYQMLADLITSDVRLTIESATQGE</sequence>
<organism>
    <name type="scientific">Salmonella paratyphi C (strain RKS4594)</name>
    <dbReference type="NCBI Taxonomy" id="476213"/>
    <lineage>
        <taxon>Bacteria</taxon>
        <taxon>Pseudomonadati</taxon>
        <taxon>Pseudomonadota</taxon>
        <taxon>Gammaproteobacteria</taxon>
        <taxon>Enterobacterales</taxon>
        <taxon>Enterobacteriaceae</taxon>
        <taxon>Salmonella</taxon>
    </lineage>
</organism>
<comment type="catalytic activity">
    <reaction evidence="1">
        <text>sn-glycerol 3-phosphate + an acyl-CoA = a 1-acyl-sn-glycero-3-phosphate + CoA</text>
        <dbReference type="Rhea" id="RHEA:15325"/>
        <dbReference type="ChEBI" id="CHEBI:57287"/>
        <dbReference type="ChEBI" id="CHEBI:57597"/>
        <dbReference type="ChEBI" id="CHEBI:57970"/>
        <dbReference type="ChEBI" id="CHEBI:58342"/>
        <dbReference type="EC" id="2.3.1.15"/>
    </reaction>
</comment>
<comment type="pathway">
    <text evidence="1">Phospholipid metabolism; CDP-diacylglycerol biosynthesis; CDP-diacylglycerol from sn-glycerol 3-phosphate: step 1/3.</text>
</comment>
<comment type="subcellular location">
    <subcellularLocation>
        <location evidence="1">Cell inner membrane</location>
        <topology evidence="1">Peripheral membrane protein</topology>
        <orientation evidence="1">Cytoplasmic side</orientation>
    </subcellularLocation>
</comment>
<comment type="domain">
    <text evidence="1">The HXXXXD motif is essential for acyltransferase activity and may constitute the binding site for the phosphate moiety of the glycerol-3-phosphate.</text>
</comment>
<comment type="similarity">
    <text evidence="1">Belongs to the GPAT/DAPAT family.</text>
</comment>
<gene>
    <name evidence="1" type="primary">plsB</name>
    <name type="ordered locus">SPC_4296</name>
</gene>